<feature type="initiator methionine" description="Removed" evidence="3">
    <location>
        <position position="1"/>
    </location>
</feature>
<feature type="chain" id="PRO_0000459452" description="Protelomerase">
    <location>
        <begin position="2"/>
        <end position="631"/>
    </location>
</feature>
<feature type="region of interest" description="Disordered" evidence="2">
    <location>
        <begin position="533"/>
        <end position="592"/>
    </location>
</feature>
<feature type="compositionally biased region" description="Acidic residues" evidence="2">
    <location>
        <begin position="534"/>
        <end position="575"/>
    </location>
</feature>
<feature type="active site" description="Nucleophile" evidence="1">
    <location>
        <position position="425"/>
    </location>
</feature>
<feature type="binding site" evidence="1">
    <location>
        <position position="275"/>
    </location>
    <ligand>
        <name>DNA</name>
        <dbReference type="ChEBI" id="CHEBI:16991"/>
    </ligand>
</feature>
<feature type="binding site" evidence="1">
    <location>
        <position position="300"/>
    </location>
    <ligand>
        <name>DNA</name>
        <dbReference type="ChEBI" id="CHEBI:16991"/>
    </ligand>
</feature>
<feature type="binding site" evidence="1">
    <location>
        <position position="383"/>
    </location>
    <ligand>
        <name>DNA</name>
        <dbReference type="ChEBI" id="CHEBI:16991"/>
    </ligand>
</feature>
<feature type="binding site" evidence="1">
    <location>
        <position position="416"/>
    </location>
    <ligand>
        <name>DNA</name>
        <dbReference type="ChEBI" id="CHEBI:16991"/>
    </ligand>
</feature>
<feature type="mutagenesis site" description="Complete loss of enzymatic activity." evidence="3">
    <original>Y</original>
    <variation>F</variation>
    <location>
        <position position="425"/>
    </location>
</feature>
<keyword id="KW-0903">Direct protein sequencing</keyword>
<keyword id="KW-0235">DNA replication</keyword>
<keyword id="KW-0238">DNA-binding</keyword>
<keyword id="KW-0255">Endonuclease</keyword>
<keyword id="KW-0378">Hydrolase</keyword>
<keyword id="KW-0540">Nuclease</keyword>
<keyword id="KW-1185">Reference proteome</keyword>
<keyword id="KW-1194">Viral DNA replication</keyword>
<proteinExistence type="evidence at protein level"/>
<reference key="1">
    <citation type="submission" date="1998-05" db="EMBL/GenBank/DDBJ databases">
        <authorList>
            <person name="Hendrix R.W."/>
            <person name="Ravin V.K."/>
            <person name="Casjens S.R."/>
            <person name="Ford M.E."/>
            <person name="Ravin N.V."/>
            <person name="Smirnov I.K."/>
        </authorList>
    </citation>
    <scope>NUCLEOTIDE SEQUENCE [GENOMIC DNA]</scope>
</reference>
<reference key="2">
    <citation type="journal article" date="2000" name="Proc. Natl. Acad. Sci. U.S.A.">
        <title>The protelomerase of temperate Escherichia coli phage N15 has cleaving-joining activity.</title>
        <authorList>
            <person name="Deneke J."/>
            <person name="Ziegelin G."/>
            <person name="Lurz R."/>
            <person name="Lanka E."/>
        </authorList>
    </citation>
    <scope>PROTEIN SEQUENCE OF 2-8</scope>
    <scope>SUBUNIT</scope>
    <scope>BIOPHYSICOCHEMICAL PROPERTIES</scope>
    <scope>MUTAGENESIS OF TYR-425</scope>
    <scope>CATALYTIC ACTIVITY</scope>
    <scope>FUNCTION</scope>
</reference>
<reference key="3">
    <citation type="journal article" date="2001" name="J. Mol. Biol.">
        <title>The protelomerase of the phage-plasmid N15 is responsible for its maintenance in linear form.</title>
        <authorList>
            <person name="Ravin N.V."/>
            <person name="Strakhova T.S."/>
            <person name="Kuprianov V.V."/>
        </authorList>
    </citation>
    <scope>FUNCTION</scope>
    <scope>CATALYTIC ACTIVITY</scope>
</reference>
<reference key="4">
    <citation type="journal article" date="2002" name="J. Biol. Chem.">
        <title>Phage N15 telomere resolution. Target requirements for recognition and processing by the protelomerase.</title>
        <authorList>
            <person name="Deneke J."/>
            <person name="Ziegelin G."/>
            <person name="Lurz R."/>
            <person name="Lanka E."/>
        </authorList>
    </citation>
    <scope>DNA-BINDING</scope>
</reference>
<organismHost>
    <name type="scientific">Escherichia coli</name>
    <dbReference type="NCBI Taxonomy" id="562"/>
</organismHost>
<organism>
    <name type="scientific">Escherichia phage N15</name>
    <name type="common">Bacteriophage N15</name>
    <dbReference type="NCBI Taxonomy" id="1604876"/>
    <lineage>
        <taxon>Viruses</taxon>
        <taxon>Duplodnaviria</taxon>
        <taxon>Heunggongvirae</taxon>
        <taxon>Uroviricota</taxon>
        <taxon>Caudoviricetes</taxon>
        <taxon>Ravinvirus</taxon>
        <taxon>Ravinvirus N15</taxon>
    </lineage>
</organism>
<accession>Q77WP1</accession>
<sequence>MSKVKIGELINTLVNEVEAIDASDRPQGDKTKRIKAAAARYKNALFNDKRKFRGKGLQKRITANTFNAYMSRARKRFDDKLHHSFDKNINKLSEKYPLYSEELSSWLSMPTANIRQHMSSLQSKLKEIMPLAEELSNVRIGSKGSDAKIARLIKKYPDWSFALSDLNSDDWKERRDYLYKLFQQGSALLEELHQLKVNHEVLYHLQLSPAERTSIQQRWADVLREKKRNVVVIDYPTYMQSIYDILNNPATLFSLNTRSGMAPLAFALAAVSGRRMIEIMFQGEFAVSGKYTVNFSGQAKKRSEDKSVTRTIYTLCEAKLFVELLTELRSCSAASDFDEVVKGYGKDDTRSENGRINAILAKAFNPWVKSFFGDDRRVYKDSRAIYARIAYEMFFRVDPRWKNVDEDVFFMEILGHDDENTQLHYKQFKLANFSRTWRPEVGDENTRLVALQKLDDEMPGFARGDAGVRLHETVKQLVEQDPSAKITNSTLRAFKFSPTMISRYLEFAADALGQFVGENGQWQLKIETPAIVLPDEESVETIDEPDDESQDDELDEDEIELDEGGGDEPTEEEGPEEHQPTALKPVFKPAKNNGDGTYKIEFEYDGKHYAWSGPADSPMAAMRSAWETYYS</sequence>
<gene>
    <name evidence="7" type="primary">gene 29</name>
</gene>
<comment type="function">
    <text evidence="3 4 5">Converts the circular intermediates produced by the viral replication and carrying a joined telomere site to a linear DNA molecule with covalently closed hairpin ends (PubMed:11580235). The viral circular DNA is cleaved at a palindromic site called telRL thereby generating a linear prophage plasmid with telomeres (PubMed:10884403, PubMed:11580235). Binds covalently to the 3'-phosphoryl of the cleaved strands (PubMed:11788606).</text>
</comment>
<comment type="biophysicochemical properties">
    <phDependence>
        <text evidence="3">Optimum pH is 7.</text>
    </phDependence>
    <temperatureDependence>
        <text evidence="3">Optimum temperature is 25 degrees Celsius.</text>
    </temperatureDependence>
</comment>
<comment type="subunit">
    <text evidence="1 3">Monomer (PubMed:10884403). Homodimer; in presence of DNA (By similarity).</text>
</comment>
<comment type="similarity">
    <text evidence="6">Belongs to the Caudoviricetes Protelomerase family.</text>
</comment>
<dbReference type="EC" id="3.1.22.-" evidence="3 4"/>
<dbReference type="EMBL" id="AF064539">
    <property type="protein sequence ID" value="AAC19065.1"/>
    <property type="molecule type" value="Genomic_DNA"/>
</dbReference>
<dbReference type="PIR" id="T13115">
    <property type="entry name" value="T13115"/>
</dbReference>
<dbReference type="RefSeq" id="NP_046924.1">
    <property type="nucleotide sequence ID" value="NC_001901.1"/>
</dbReference>
<dbReference type="SMR" id="Q77WP1"/>
<dbReference type="GeneID" id="1261665"/>
<dbReference type="KEGG" id="vg:1261665"/>
<dbReference type="Proteomes" id="UP000002132">
    <property type="component" value="Genome"/>
</dbReference>
<dbReference type="GO" id="GO:0003677">
    <property type="term" value="F:DNA binding"/>
    <property type="evidence" value="ECO:0007669"/>
    <property type="project" value="UniProtKB-KW"/>
</dbReference>
<dbReference type="GO" id="GO:0004519">
    <property type="term" value="F:endonuclease activity"/>
    <property type="evidence" value="ECO:0007669"/>
    <property type="project" value="UniProtKB-KW"/>
</dbReference>
<dbReference type="GO" id="GO:0006260">
    <property type="term" value="P:DNA replication"/>
    <property type="evidence" value="ECO:0007669"/>
    <property type="project" value="UniProtKB-KW"/>
</dbReference>
<dbReference type="GO" id="GO:0039693">
    <property type="term" value="P:viral DNA genome replication"/>
    <property type="evidence" value="ECO:0007669"/>
    <property type="project" value="UniProtKB-KW"/>
</dbReference>
<dbReference type="Gene3D" id="1.10.10.2040">
    <property type="match status" value="1"/>
</dbReference>
<dbReference type="Gene3D" id="1.10.287.3180">
    <property type="match status" value="1"/>
</dbReference>
<dbReference type="Gene3D" id="1.20.1440.270">
    <property type="match status" value="1"/>
</dbReference>
<dbReference type="Gene3D" id="1.10.443.30">
    <property type="entry name" value="Telomere resolvase"/>
    <property type="match status" value="1"/>
</dbReference>
<dbReference type="InterPro" id="IPR032047">
    <property type="entry name" value="ResT/TelK_cat"/>
</dbReference>
<dbReference type="InterPro" id="IPR038280">
    <property type="entry name" value="ResT/TelK_cat_sf"/>
</dbReference>
<dbReference type="InterPro" id="IPR049460">
    <property type="entry name" value="TelK_muzzle"/>
</dbReference>
<dbReference type="InterPro" id="IPR055040">
    <property type="entry name" value="TelK_N"/>
</dbReference>
<dbReference type="InterPro" id="IPR049454">
    <property type="entry name" value="TelK_stirrup"/>
</dbReference>
<dbReference type="Pfam" id="PF16684">
    <property type="entry name" value="ResT-TelK_cat"/>
    <property type="match status" value="1"/>
</dbReference>
<dbReference type="Pfam" id="PF20849">
    <property type="entry name" value="TelK_muzzle"/>
    <property type="match status" value="1"/>
</dbReference>
<dbReference type="Pfam" id="PF22853">
    <property type="entry name" value="TelK_N"/>
    <property type="match status" value="1"/>
</dbReference>
<dbReference type="Pfam" id="PF20818">
    <property type="entry name" value="TelK_stirrup"/>
    <property type="match status" value="1"/>
</dbReference>
<protein>
    <recommendedName>
        <fullName evidence="6">Protelomerase</fullName>
        <ecNumber evidence="3 4">3.1.22.-</ecNumber>
    </recommendedName>
    <alternativeName>
        <fullName evidence="6">Gene product 29</fullName>
    </alternativeName>
    <alternativeName>
        <fullName>Gp29</fullName>
    </alternativeName>
    <alternativeName>
        <fullName evidence="6">Hairpin telomere resolvase</fullName>
    </alternativeName>
    <alternativeName>
        <fullName>TelN</fullName>
    </alternativeName>
</protein>
<name>PTELO_BPN15</name>
<evidence type="ECO:0000250" key="1">
    <source>
        <dbReference type="UniProtKB" id="Q6UAV6"/>
    </source>
</evidence>
<evidence type="ECO:0000256" key="2">
    <source>
        <dbReference type="SAM" id="MobiDB-lite"/>
    </source>
</evidence>
<evidence type="ECO:0000269" key="3">
    <source>
    </source>
</evidence>
<evidence type="ECO:0000269" key="4">
    <source>
    </source>
</evidence>
<evidence type="ECO:0000269" key="5">
    <source>
    </source>
</evidence>
<evidence type="ECO:0000305" key="6"/>
<evidence type="ECO:0000312" key="7">
    <source>
        <dbReference type="EMBL" id="AAC19065.1"/>
    </source>
</evidence>